<name>RPOB_EUGGR</name>
<gene>
    <name evidence="1" type="primary">rpoB</name>
</gene>
<dbReference type="EC" id="2.7.7.6" evidence="1"/>
<dbReference type="EMBL" id="X17191">
    <property type="protein sequence ID" value="CAA35052.1"/>
    <property type="molecule type" value="Genomic_DNA"/>
</dbReference>
<dbReference type="EMBL" id="X70810">
    <property type="protein sequence ID" value="CAA50138.1"/>
    <property type="molecule type" value="Genomic_DNA"/>
</dbReference>
<dbReference type="PIR" id="S09210">
    <property type="entry name" value="RNEGB"/>
</dbReference>
<dbReference type="RefSeq" id="NP_041951.1">
    <property type="nucleotide sequence ID" value="NC_001603.2"/>
</dbReference>
<dbReference type="SMR" id="P23579"/>
<dbReference type="GeneID" id="807537"/>
<dbReference type="GO" id="GO:0009507">
    <property type="term" value="C:chloroplast"/>
    <property type="evidence" value="ECO:0007669"/>
    <property type="project" value="UniProtKB-SubCell"/>
</dbReference>
<dbReference type="GO" id="GO:0000428">
    <property type="term" value="C:DNA-directed RNA polymerase complex"/>
    <property type="evidence" value="ECO:0007669"/>
    <property type="project" value="UniProtKB-KW"/>
</dbReference>
<dbReference type="GO" id="GO:0005739">
    <property type="term" value="C:mitochondrion"/>
    <property type="evidence" value="ECO:0007669"/>
    <property type="project" value="GOC"/>
</dbReference>
<dbReference type="GO" id="GO:0003677">
    <property type="term" value="F:DNA binding"/>
    <property type="evidence" value="ECO:0007669"/>
    <property type="project" value="UniProtKB-UniRule"/>
</dbReference>
<dbReference type="GO" id="GO:0003899">
    <property type="term" value="F:DNA-directed RNA polymerase activity"/>
    <property type="evidence" value="ECO:0007669"/>
    <property type="project" value="UniProtKB-UniRule"/>
</dbReference>
<dbReference type="GO" id="GO:0032549">
    <property type="term" value="F:ribonucleoside binding"/>
    <property type="evidence" value="ECO:0007669"/>
    <property type="project" value="InterPro"/>
</dbReference>
<dbReference type="GO" id="GO:0006351">
    <property type="term" value="P:DNA-templated transcription"/>
    <property type="evidence" value="ECO:0007669"/>
    <property type="project" value="UniProtKB-UniRule"/>
</dbReference>
<dbReference type="CDD" id="cd00653">
    <property type="entry name" value="RNA_pol_B_RPB2"/>
    <property type="match status" value="1"/>
</dbReference>
<dbReference type="Gene3D" id="2.40.50.100">
    <property type="match status" value="1"/>
</dbReference>
<dbReference type="Gene3D" id="2.40.50.150">
    <property type="match status" value="1"/>
</dbReference>
<dbReference type="Gene3D" id="3.90.1100.10">
    <property type="match status" value="1"/>
</dbReference>
<dbReference type="Gene3D" id="2.30.150.10">
    <property type="entry name" value="DNA-directed RNA polymerase, beta subunit, external 1 domain"/>
    <property type="match status" value="1"/>
</dbReference>
<dbReference type="Gene3D" id="2.40.270.10">
    <property type="entry name" value="DNA-directed RNA polymerase, subunit 2, domain 6"/>
    <property type="match status" value="1"/>
</dbReference>
<dbReference type="Gene3D" id="3.90.1800.10">
    <property type="entry name" value="RNA polymerase alpha subunit dimerisation domain"/>
    <property type="match status" value="1"/>
</dbReference>
<dbReference type="Gene3D" id="3.90.1110.10">
    <property type="entry name" value="RNA polymerase Rpb2, domain 2"/>
    <property type="match status" value="1"/>
</dbReference>
<dbReference type="HAMAP" id="MF_01321">
    <property type="entry name" value="RNApol_bact_RpoB"/>
    <property type="match status" value="1"/>
</dbReference>
<dbReference type="InterPro" id="IPR042107">
    <property type="entry name" value="DNA-dir_RNA_pol_bsu_ext_1_sf"/>
</dbReference>
<dbReference type="InterPro" id="IPR015712">
    <property type="entry name" value="DNA-dir_RNA_pol_su2"/>
</dbReference>
<dbReference type="InterPro" id="IPR007120">
    <property type="entry name" value="DNA-dir_RNAP_su2_dom"/>
</dbReference>
<dbReference type="InterPro" id="IPR037033">
    <property type="entry name" value="DNA-dir_RNAP_su2_hyb_sf"/>
</dbReference>
<dbReference type="InterPro" id="IPR010243">
    <property type="entry name" value="RNA_pol_bsu_bac"/>
</dbReference>
<dbReference type="InterPro" id="IPR007121">
    <property type="entry name" value="RNA_pol_bsu_CS"/>
</dbReference>
<dbReference type="InterPro" id="IPR007642">
    <property type="entry name" value="RNA_pol_Rpb2_2"/>
</dbReference>
<dbReference type="InterPro" id="IPR037034">
    <property type="entry name" value="RNA_pol_Rpb2_2_sf"/>
</dbReference>
<dbReference type="InterPro" id="IPR007645">
    <property type="entry name" value="RNA_pol_Rpb2_3"/>
</dbReference>
<dbReference type="InterPro" id="IPR007641">
    <property type="entry name" value="RNA_pol_Rpb2_7"/>
</dbReference>
<dbReference type="InterPro" id="IPR014724">
    <property type="entry name" value="RNA_pol_RPB2_OB-fold"/>
</dbReference>
<dbReference type="NCBIfam" id="NF001616">
    <property type="entry name" value="PRK00405.1"/>
    <property type="match status" value="1"/>
</dbReference>
<dbReference type="PANTHER" id="PTHR20856">
    <property type="entry name" value="DNA-DIRECTED RNA POLYMERASE I SUBUNIT 2"/>
    <property type="match status" value="1"/>
</dbReference>
<dbReference type="Pfam" id="PF04561">
    <property type="entry name" value="RNA_pol_Rpb2_2"/>
    <property type="match status" value="1"/>
</dbReference>
<dbReference type="Pfam" id="PF04565">
    <property type="entry name" value="RNA_pol_Rpb2_3"/>
    <property type="match status" value="1"/>
</dbReference>
<dbReference type="Pfam" id="PF00562">
    <property type="entry name" value="RNA_pol_Rpb2_6"/>
    <property type="match status" value="1"/>
</dbReference>
<dbReference type="Pfam" id="PF04560">
    <property type="entry name" value="RNA_pol_Rpb2_7"/>
    <property type="match status" value="1"/>
</dbReference>
<dbReference type="SUPFAM" id="SSF64484">
    <property type="entry name" value="beta and beta-prime subunits of DNA dependent RNA-polymerase"/>
    <property type="match status" value="1"/>
</dbReference>
<dbReference type="PROSITE" id="PS01166">
    <property type="entry name" value="RNA_POL_BETA"/>
    <property type="match status" value="1"/>
</dbReference>
<accession>P23579</accession>
<keyword id="KW-0150">Chloroplast</keyword>
<keyword id="KW-0240">DNA-directed RNA polymerase</keyword>
<keyword id="KW-0548">Nucleotidyltransferase</keyword>
<keyword id="KW-0934">Plastid</keyword>
<keyword id="KW-0804">Transcription</keyword>
<keyword id="KW-0808">Transferase</keyword>
<comment type="function">
    <text>DNA-dependent RNA polymerase catalyzes the transcription of DNA into RNA using the four ribonucleoside triphosphates as substrates.</text>
</comment>
<comment type="catalytic activity">
    <reaction evidence="1">
        <text>RNA(n) + a ribonucleoside 5'-triphosphate = RNA(n+1) + diphosphate</text>
        <dbReference type="Rhea" id="RHEA:21248"/>
        <dbReference type="Rhea" id="RHEA-COMP:14527"/>
        <dbReference type="Rhea" id="RHEA-COMP:17342"/>
        <dbReference type="ChEBI" id="CHEBI:33019"/>
        <dbReference type="ChEBI" id="CHEBI:61557"/>
        <dbReference type="ChEBI" id="CHEBI:140395"/>
        <dbReference type="EC" id="2.7.7.6"/>
    </reaction>
</comment>
<comment type="subunit">
    <text evidence="1">In plastids the minimal PEP RNA polymerase catalytic core is composed of four subunits: alpha, beta, beta', and beta''. When a (nuclear-encoded) sigma factor is associated with the core the holoenzyme is formed, which can initiate transcription.</text>
</comment>
<comment type="subcellular location">
    <subcellularLocation>
        <location>Plastid</location>
        <location>Chloroplast</location>
    </subcellularLocation>
</comment>
<comment type="similarity">
    <text evidence="1">Belongs to the RNA polymerase beta chain family.</text>
</comment>
<organism>
    <name type="scientific">Euglena gracilis</name>
    <dbReference type="NCBI Taxonomy" id="3039"/>
    <lineage>
        <taxon>Eukaryota</taxon>
        <taxon>Discoba</taxon>
        <taxon>Euglenozoa</taxon>
        <taxon>Euglenida</taxon>
        <taxon>Spirocuta</taxon>
        <taxon>Euglenophyceae</taxon>
        <taxon>Euglenales</taxon>
        <taxon>Euglenaceae</taxon>
        <taxon>Euglena</taxon>
    </lineage>
</organism>
<protein>
    <recommendedName>
        <fullName evidence="1">DNA-directed RNA polymerase subunit beta</fullName>
        <ecNumber evidence="1">2.7.7.6</ecNumber>
    </recommendedName>
    <alternativeName>
        <fullName evidence="1">PEP</fullName>
    </alternativeName>
    <alternativeName>
        <fullName evidence="1">Plastid-encoded RNA polymerase subunit beta</fullName>
        <shortName evidence="1">RNA polymerase subunit beta</shortName>
    </alternativeName>
</protein>
<evidence type="ECO:0000255" key="1">
    <source>
        <dbReference type="HAMAP-Rule" id="MF_01321"/>
    </source>
</evidence>
<geneLocation type="chloroplast"/>
<feature type="chain" id="PRO_0000048022" description="DNA-directed RNA polymerase subunit beta">
    <location>
        <begin position="1"/>
        <end position="1082"/>
    </location>
</feature>
<reference key="1">
    <citation type="journal article" date="1990" name="Nucleic Acids Res.">
        <title>The Euglena gracilis chloroplast rpoB gene. Novel gene organization and transcription of the RNA polymerase subunit operon.</title>
        <authorList>
            <person name="Yepiz-Plascencia G.M."/>
            <person name="Radebaugh C.A."/>
            <person name="Hallick R.B."/>
        </authorList>
    </citation>
    <scope>NUCLEOTIDE SEQUENCE [GENOMIC DNA]</scope>
    <source>
        <strain>Z / UTEX 753</strain>
    </source>
</reference>
<reference key="2">
    <citation type="journal article" date="1993" name="Nucleic Acids Res.">
        <title>Complete sequence of Euglena gracilis chloroplast DNA.</title>
        <authorList>
            <person name="Hallick R.B."/>
            <person name="Hong L."/>
            <person name="Drager R.G."/>
            <person name="Favreau M.R."/>
            <person name="Monfort A."/>
            <person name="Orsat B."/>
            <person name="Spielmann A."/>
            <person name="Stutz E."/>
        </authorList>
    </citation>
    <scope>NUCLEOTIDE SEQUENCE [LARGE SCALE GENOMIC DNA]</scope>
    <source>
        <strain>Z / UTEX 753</strain>
    </source>
</reference>
<proteinExistence type="inferred from homology"/>
<sequence>MVNGCRVRSNLLDIQRNSFRSFLKKGLVEELRKIKDIAHEGFRISFQTDNVKYKKPKISAEFALKNGETYSLSVHIPVEVTYNNMFLVRNKYILFAKIPLMTEKGTFIFNGNKRIMVNQIIRSPGVYFEKNRYNDSIFATLIPTFGSWLTFKIDQDEGIFVKVDKIKTAIPLINFLKCLGLSRKKFFLYLNDPIFIETLQESESYGIRLEFFEFYKIFFPNEVNVRFGNARKFLRSKFMDPRKYDLGEVGRFRVNTKIYRSEFFQSNRTLQPEDVLGIAHYLIELKKGMIPFDEIDDLKNKLVRSIGELLQSQFRIILNELESSLKEKLIFLYKNPSEKTFRLSRFFNSYFITNRIRKFFSVNPLSQLLDDTNSLSELTHKRKLSPFGPNGLNKERTKLDVREINTSQYGRVCPIETSEGKNAGLILSLAKDVRVDKYGFLESPFYKVLRGKIETNKGIYFISSAQEKYFTVAPFDVFRSSQSNLLDKNKLLGVKRSKIFSYSFSKNIDFISISTDQFTSLGTGLVPFLEHNDANRVLMGSNMQRQSLILLEKEVPFIKTGREALINRESDATVLAKSSGKVIYSSLKKIVIQEEEYCANIEFFNKNYSFFNLLGCLNEISQKNFKLIKKVNQKIYFLESPKKSNHGVYIQKIPIVHEGEWVRKGQIIADGMSTLRGGICLGKNVLVAYLGWEGYNFEDAVIISERLVFEDIFTSIHMKKFKTFIVNDEKKGENISMFIPNASLKTIKNLKNNGIIKIGSEIKAQDVLIGRIKVKLKNTPKNKMLIAFFGNKVRKDVSLRSPRSLVGIVTSVEILCKKSNCSVLIHVAEKRRIQIGDKIAGRHGNKGIISKIVPSIDMPFLPDGTPVDMILNPLGIPSRMNVGQVFESLLNLSSLFLKERYKIQPFDEVQTSMNSKSFVYKKLNEARKRTKKDWLFNPNYPGKAFLYDGRNCRPFDHPVAFGYAYILKLIHMVKDKIHARVTGPYSSVTQQPLRGKSKNGGQRFGEMEVWAIEGFGAAYLLQELLTIKSDDVLNRSEALFSLINGTYFSKPNIPEAFKLFILEMQSLCIDIKIFTNNYKKFD</sequence>